<reference key="1">
    <citation type="journal article" date="2002" name="Nature">
        <title>Complete genome sequence of the model actinomycete Streptomyces coelicolor A3(2).</title>
        <authorList>
            <person name="Bentley S.D."/>
            <person name="Chater K.F."/>
            <person name="Cerdeno-Tarraga A.-M."/>
            <person name="Challis G.L."/>
            <person name="Thomson N.R."/>
            <person name="James K.D."/>
            <person name="Harris D.E."/>
            <person name="Quail M.A."/>
            <person name="Kieser H."/>
            <person name="Harper D."/>
            <person name="Bateman A."/>
            <person name="Brown S."/>
            <person name="Chandra G."/>
            <person name="Chen C.W."/>
            <person name="Collins M."/>
            <person name="Cronin A."/>
            <person name="Fraser A."/>
            <person name="Goble A."/>
            <person name="Hidalgo J."/>
            <person name="Hornsby T."/>
            <person name="Howarth S."/>
            <person name="Huang C.-H."/>
            <person name="Kieser T."/>
            <person name="Larke L."/>
            <person name="Murphy L.D."/>
            <person name="Oliver K."/>
            <person name="O'Neil S."/>
            <person name="Rabbinowitsch E."/>
            <person name="Rajandream M.A."/>
            <person name="Rutherford K.M."/>
            <person name="Rutter S."/>
            <person name="Seeger K."/>
            <person name="Saunders D."/>
            <person name="Sharp S."/>
            <person name="Squares R."/>
            <person name="Squares S."/>
            <person name="Taylor K."/>
            <person name="Warren T."/>
            <person name="Wietzorrek A."/>
            <person name="Woodward J.R."/>
            <person name="Barrell B.G."/>
            <person name="Parkhill J."/>
            <person name="Hopwood D.A."/>
        </authorList>
    </citation>
    <scope>NUCLEOTIDE SEQUENCE [LARGE SCALE GENOMIC DNA]</scope>
    <source>
        <strain>ATCC BAA-471 / A3(2) / M145</strain>
    </source>
</reference>
<feature type="initiator methionine" description="Removed" evidence="1">
    <location>
        <position position="1"/>
    </location>
</feature>
<feature type="chain" id="PRO_0000170867" description="Formamidopyrimidine-DNA glycosylase">
    <location>
        <begin position="2"/>
        <end position="286"/>
    </location>
</feature>
<feature type="zinc finger region" description="FPG-type">
    <location>
        <begin position="246"/>
        <end position="280"/>
    </location>
</feature>
<feature type="active site" description="Schiff-base intermediate with DNA" evidence="1">
    <location>
        <position position="2"/>
    </location>
</feature>
<feature type="active site" description="Proton donor" evidence="1">
    <location>
        <position position="3"/>
    </location>
</feature>
<feature type="active site" description="Proton donor; for beta-elimination activity" evidence="1">
    <location>
        <position position="61"/>
    </location>
</feature>
<feature type="active site" description="Proton donor; for delta-elimination activity" evidence="1">
    <location>
        <position position="270"/>
    </location>
</feature>
<feature type="binding site" evidence="1">
    <location>
        <position position="96"/>
    </location>
    <ligand>
        <name>DNA</name>
        <dbReference type="ChEBI" id="CHEBI:16991"/>
    </ligand>
</feature>
<feature type="binding site" evidence="1">
    <location>
        <position position="117"/>
    </location>
    <ligand>
        <name>DNA</name>
        <dbReference type="ChEBI" id="CHEBI:16991"/>
    </ligand>
</feature>
<feature type="binding site" evidence="1">
    <location>
        <position position="160"/>
    </location>
    <ligand>
        <name>DNA</name>
        <dbReference type="ChEBI" id="CHEBI:16991"/>
    </ligand>
</feature>
<evidence type="ECO:0000250" key="1"/>
<evidence type="ECO:0000305" key="2"/>
<dbReference type="EC" id="3.2.2.23"/>
<dbReference type="EC" id="4.2.99.18"/>
<dbReference type="EMBL" id="AL939124">
    <property type="protein sequence ID" value="CAA22416.1"/>
    <property type="molecule type" value="Genomic_DNA"/>
</dbReference>
<dbReference type="PIR" id="T35657">
    <property type="entry name" value="T35657"/>
</dbReference>
<dbReference type="RefSeq" id="NP_629708.1">
    <property type="nucleotide sequence ID" value="NC_003888.3"/>
</dbReference>
<dbReference type="RefSeq" id="WP_003973422.1">
    <property type="nucleotide sequence ID" value="NZ_VNID01000011.1"/>
</dbReference>
<dbReference type="SMR" id="Q9ZBQ6"/>
<dbReference type="FunCoup" id="Q9ZBQ6">
    <property type="interactions" value="72"/>
</dbReference>
<dbReference type="STRING" id="100226.gene:17763231"/>
<dbReference type="PaxDb" id="100226-SCO5573"/>
<dbReference type="KEGG" id="sco:SCO5573"/>
<dbReference type="PATRIC" id="fig|100226.15.peg.5662"/>
<dbReference type="eggNOG" id="COG0266">
    <property type="taxonomic scope" value="Bacteria"/>
</dbReference>
<dbReference type="HOGENOM" id="CLU_038423_1_2_11"/>
<dbReference type="InParanoid" id="Q9ZBQ6"/>
<dbReference type="OrthoDB" id="9800855at2"/>
<dbReference type="PhylomeDB" id="Q9ZBQ6"/>
<dbReference type="Proteomes" id="UP000001973">
    <property type="component" value="Chromosome"/>
</dbReference>
<dbReference type="GO" id="GO:0034039">
    <property type="term" value="F:8-oxo-7,8-dihydroguanine DNA N-glycosylase activity"/>
    <property type="evidence" value="ECO:0000318"/>
    <property type="project" value="GO_Central"/>
</dbReference>
<dbReference type="GO" id="GO:0140078">
    <property type="term" value="F:class I DNA-(apurinic or apyrimidinic site) endonuclease activity"/>
    <property type="evidence" value="ECO:0007669"/>
    <property type="project" value="UniProtKB-EC"/>
</dbReference>
<dbReference type="GO" id="GO:0003684">
    <property type="term" value="F:damaged DNA binding"/>
    <property type="evidence" value="ECO:0007669"/>
    <property type="project" value="InterPro"/>
</dbReference>
<dbReference type="GO" id="GO:0003906">
    <property type="term" value="F:DNA-(apurinic or apyrimidinic site) endonuclease activity"/>
    <property type="evidence" value="ECO:0000318"/>
    <property type="project" value="GO_Central"/>
</dbReference>
<dbReference type="GO" id="GO:0008270">
    <property type="term" value="F:zinc ion binding"/>
    <property type="evidence" value="ECO:0007669"/>
    <property type="project" value="UniProtKB-UniRule"/>
</dbReference>
<dbReference type="GO" id="GO:0006284">
    <property type="term" value="P:base-excision repair"/>
    <property type="evidence" value="ECO:0000318"/>
    <property type="project" value="GO_Central"/>
</dbReference>
<dbReference type="CDD" id="cd08966">
    <property type="entry name" value="EcFpg-like_N"/>
    <property type="match status" value="1"/>
</dbReference>
<dbReference type="FunFam" id="1.10.8.50:FF:000003">
    <property type="entry name" value="Formamidopyrimidine-DNA glycosylase"/>
    <property type="match status" value="1"/>
</dbReference>
<dbReference type="FunFam" id="3.20.190.10:FF:000006">
    <property type="entry name" value="Formamidopyrimidine-DNA glycosylase"/>
    <property type="match status" value="1"/>
</dbReference>
<dbReference type="Gene3D" id="1.10.8.50">
    <property type="match status" value="1"/>
</dbReference>
<dbReference type="Gene3D" id="3.20.190.10">
    <property type="entry name" value="MutM-like, N-terminal"/>
    <property type="match status" value="1"/>
</dbReference>
<dbReference type="HAMAP" id="MF_00103">
    <property type="entry name" value="Fapy_DNA_glycosyl"/>
    <property type="match status" value="1"/>
</dbReference>
<dbReference type="InterPro" id="IPR015886">
    <property type="entry name" value="DNA_glyclase/AP_lyase_DNA-bd"/>
</dbReference>
<dbReference type="InterPro" id="IPR015887">
    <property type="entry name" value="DNA_glyclase_Znf_dom_DNA_BS"/>
</dbReference>
<dbReference type="InterPro" id="IPR020629">
    <property type="entry name" value="Formamido-pyr_DNA_Glyclase"/>
</dbReference>
<dbReference type="InterPro" id="IPR012319">
    <property type="entry name" value="FPG_cat"/>
</dbReference>
<dbReference type="InterPro" id="IPR035937">
    <property type="entry name" value="MutM-like_N-ter"/>
</dbReference>
<dbReference type="InterPro" id="IPR010979">
    <property type="entry name" value="Ribosomal_uS13-like_H2TH"/>
</dbReference>
<dbReference type="InterPro" id="IPR000214">
    <property type="entry name" value="Znf_DNA_glyclase/AP_lyase"/>
</dbReference>
<dbReference type="NCBIfam" id="TIGR00577">
    <property type="entry name" value="fpg"/>
    <property type="match status" value="1"/>
</dbReference>
<dbReference type="NCBIfam" id="NF002211">
    <property type="entry name" value="PRK01103.1"/>
    <property type="match status" value="1"/>
</dbReference>
<dbReference type="PANTHER" id="PTHR22993">
    <property type="entry name" value="FORMAMIDOPYRIMIDINE-DNA GLYCOSYLASE"/>
    <property type="match status" value="1"/>
</dbReference>
<dbReference type="PANTHER" id="PTHR22993:SF9">
    <property type="entry name" value="FORMAMIDOPYRIMIDINE-DNA GLYCOSYLASE"/>
    <property type="match status" value="1"/>
</dbReference>
<dbReference type="Pfam" id="PF01149">
    <property type="entry name" value="Fapy_DNA_glyco"/>
    <property type="match status" value="1"/>
</dbReference>
<dbReference type="Pfam" id="PF06831">
    <property type="entry name" value="H2TH"/>
    <property type="match status" value="1"/>
</dbReference>
<dbReference type="SMART" id="SM00898">
    <property type="entry name" value="Fapy_DNA_glyco"/>
    <property type="match status" value="1"/>
</dbReference>
<dbReference type="SMART" id="SM01232">
    <property type="entry name" value="H2TH"/>
    <property type="match status" value="1"/>
</dbReference>
<dbReference type="SUPFAM" id="SSF57716">
    <property type="entry name" value="Glucocorticoid receptor-like (DNA-binding domain)"/>
    <property type="match status" value="1"/>
</dbReference>
<dbReference type="SUPFAM" id="SSF81624">
    <property type="entry name" value="N-terminal domain of MutM-like DNA repair proteins"/>
    <property type="match status" value="1"/>
</dbReference>
<dbReference type="SUPFAM" id="SSF46946">
    <property type="entry name" value="S13-like H2TH domain"/>
    <property type="match status" value="1"/>
</dbReference>
<dbReference type="PROSITE" id="PS51068">
    <property type="entry name" value="FPG_CAT"/>
    <property type="match status" value="1"/>
</dbReference>
<dbReference type="PROSITE" id="PS01242">
    <property type="entry name" value="ZF_FPG_1"/>
    <property type="match status" value="1"/>
</dbReference>
<dbReference type="PROSITE" id="PS51066">
    <property type="entry name" value="ZF_FPG_2"/>
    <property type="match status" value="1"/>
</dbReference>
<name>FPG_STRCO</name>
<proteinExistence type="inferred from homology"/>
<protein>
    <recommendedName>
        <fullName>Formamidopyrimidine-DNA glycosylase</fullName>
        <shortName>Fapy-DNA glycosylase</shortName>
        <ecNumber>3.2.2.23</ecNumber>
    </recommendedName>
    <alternativeName>
        <fullName>DNA-(apurinic or apyrimidinic site) lyase MutM</fullName>
        <shortName>AP lyase MutM</shortName>
        <ecNumber>4.2.99.18</ecNumber>
    </alternativeName>
</protein>
<sequence>MPELPEVEVVRRGLERWAAHRTVADVEVLHPRAVRRHVAGPDDFAHRLKDHRIGTPSRRGKYLWLPLEDTDQAVLAHLGMSGQLLVQPHETPAEKHLRIRVRFADALGTELRFVDQRTFGGLSLHDTSADGLPDVIAHIARDPLDPLFDDEAFHHALRRKRTTIKRALLDQSLISGVGNIYADEALWRARLHYERPTATLTRPRTTELLGHVRDVMNAALAVGGTSFDSLYVNVNGESGYFDRSLDAYGREGMPCRRCATPMRRRPWMNRSSYFCPKCQRPPRVTP</sequence>
<comment type="function">
    <text evidence="1">Involved in base excision repair of DNA damaged by oxidation or by mutagenic agents. Acts as a DNA glycosylase that recognizes and removes damaged bases. Has a preference for oxidized purines, such as 7,8-dihydro-8-oxoguanine (8-oxoG). Has AP (apurinic/apyrimidinic) lyase activity and introduces nicks in the DNA strand. Cleaves the DNA backbone by beta-delta elimination to generate a single-strand break at the site of the removed base with both 3'- and 5'-phosphates (By similarity).</text>
</comment>
<comment type="catalytic activity">
    <reaction>
        <text>Hydrolysis of DNA containing ring-opened 7-methylguanine residues, releasing 2,6-diamino-4-hydroxy-5-(N-methyl)formamidopyrimidine.</text>
        <dbReference type="EC" id="3.2.2.23"/>
    </reaction>
</comment>
<comment type="catalytic activity">
    <reaction>
        <text>2'-deoxyribonucleotide-(2'-deoxyribose 5'-phosphate)-2'-deoxyribonucleotide-DNA = a 3'-end 2'-deoxyribonucleotide-(2,3-dehydro-2,3-deoxyribose 5'-phosphate)-DNA + a 5'-end 5'-phospho-2'-deoxyribonucleoside-DNA + H(+)</text>
        <dbReference type="Rhea" id="RHEA:66592"/>
        <dbReference type="Rhea" id="RHEA-COMP:13180"/>
        <dbReference type="Rhea" id="RHEA-COMP:16897"/>
        <dbReference type="Rhea" id="RHEA-COMP:17067"/>
        <dbReference type="ChEBI" id="CHEBI:15378"/>
        <dbReference type="ChEBI" id="CHEBI:136412"/>
        <dbReference type="ChEBI" id="CHEBI:157695"/>
        <dbReference type="ChEBI" id="CHEBI:167181"/>
        <dbReference type="EC" id="4.2.99.18"/>
    </reaction>
</comment>
<comment type="cofactor">
    <cofactor evidence="1">
        <name>Zn(2+)</name>
        <dbReference type="ChEBI" id="CHEBI:29105"/>
    </cofactor>
    <text evidence="1">Binds 1 zinc ion per subunit.</text>
</comment>
<comment type="subunit">
    <text evidence="1">Monomer.</text>
</comment>
<comment type="similarity">
    <text evidence="2">Belongs to the FPG family.</text>
</comment>
<keyword id="KW-0227">DNA damage</keyword>
<keyword id="KW-0234">DNA repair</keyword>
<keyword id="KW-0238">DNA-binding</keyword>
<keyword id="KW-0326">Glycosidase</keyword>
<keyword id="KW-0378">Hydrolase</keyword>
<keyword id="KW-0456">Lyase</keyword>
<keyword id="KW-0479">Metal-binding</keyword>
<keyword id="KW-0511">Multifunctional enzyme</keyword>
<keyword id="KW-1185">Reference proteome</keyword>
<keyword id="KW-0862">Zinc</keyword>
<keyword id="KW-0863">Zinc-finger</keyword>
<gene>
    <name type="primary">mutM</name>
    <name type="synonym">fpg</name>
    <name type="ordered locus">SCO5573</name>
    <name type="ORF">SC7A1.17</name>
</gene>
<organism>
    <name type="scientific">Streptomyces coelicolor (strain ATCC BAA-471 / A3(2) / M145)</name>
    <dbReference type="NCBI Taxonomy" id="100226"/>
    <lineage>
        <taxon>Bacteria</taxon>
        <taxon>Bacillati</taxon>
        <taxon>Actinomycetota</taxon>
        <taxon>Actinomycetes</taxon>
        <taxon>Kitasatosporales</taxon>
        <taxon>Streptomycetaceae</taxon>
        <taxon>Streptomyces</taxon>
        <taxon>Streptomyces albidoflavus group</taxon>
    </lineage>
</organism>
<accession>Q9ZBQ6</accession>